<proteinExistence type="inferred from homology"/>
<organism>
    <name type="scientific">Staphylococcus aureus (strain Mu50 / ATCC 700699)</name>
    <dbReference type="NCBI Taxonomy" id="158878"/>
    <lineage>
        <taxon>Bacteria</taxon>
        <taxon>Bacillati</taxon>
        <taxon>Bacillota</taxon>
        <taxon>Bacilli</taxon>
        <taxon>Bacillales</taxon>
        <taxon>Staphylococcaceae</taxon>
        <taxon>Staphylococcus</taxon>
    </lineage>
</organism>
<gene>
    <name type="ordered locus">SAV2186</name>
</gene>
<keyword id="KW-0479">Metal-binding</keyword>
<keyword id="KW-0560">Oxidoreductase</keyword>
<keyword id="KW-0862">Zinc</keyword>
<accession>P63475</accession>
<accession>Q99S81</accession>
<evidence type="ECO:0000305" key="1"/>
<protein>
    <recommendedName>
        <fullName>Zinc-type alcohol dehydrogenase-like protein SAV2186</fullName>
    </recommendedName>
</protein>
<comment type="similarity">
    <text evidence="1">Belongs to the zinc-containing alcohol dehydrogenase family. Quinone oxidoreductase subfamily.</text>
</comment>
<dbReference type="EMBL" id="BA000017">
    <property type="protein sequence ID" value="BAB58348.1"/>
    <property type="molecule type" value="Genomic_DNA"/>
</dbReference>
<dbReference type="RefSeq" id="WP_000781951.1">
    <property type="nucleotide sequence ID" value="NC_002758.2"/>
</dbReference>
<dbReference type="SMR" id="P63475"/>
<dbReference type="KEGG" id="sav:SAV2186"/>
<dbReference type="HOGENOM" id="CLU_026673_3_0_9"/>
<dbReference type="PhylomeDB" id="P63475"/>
<dbReference type="Proteomes" id="UP000002481">
    <property type="component" value="Chromosome"/>
</dbReference>
<dbReference type="GO" id="GO:0016491">
    <property type="term" value="F:oxidoreductase activity"/>
    <property type="evidence" value="ECO:0007669"/>
    <property type="project" value="UniProtKB-KW"/>
</dbReference>
<dbReference type="GO" id="GO:0008270">
    <property type="term" value="F:zinc ion binding"/>
    <property type="evidence" value="ECO:0007669"/>
    <property type="project" value="InterPro"/>
</dbReference>
<dbReference type="CDD" id="cd08252">
    <property type="entry name" value="AL_MDR"/>
    <property type="match status" value="1"/>
</dbReference>
<dbReference type="Gene3D" id="3.90.180.10">
    <property type="entry name" value="Medium-chain alcohol dehydrogenases, catalytic domain"/>
    <property type="match status" value="1"/>
</dbReference>
<dbReference type="Gene3D" id="3.40.50.720">
    <property type="entry name" value="NAD(P)-binding Rossmann-like Domain"/>
    <property type="match status" value="1"/>
</dbReference>
<dbReference type="InterPro" id="IPR013149">
    <property type="entry name" value="ADH-like_C"/>
</dbReference>
<dbReference type="InterPro" id="IPR013154">
    <property type="entry name" value="ADH-like_N"/>
</dbReference>
<dbReference type="InterPro" id="IPR014182">
    <property type="entry name" value="ADH_Zn_typ-1"/>
</dbReference>
<dbReference type="InterPro" id="IPR011032">
    <property type="entry name" value="GroES-like_sf"/>
</dbReference>
<dbReference type="InterPro" id="IPR036291">
    <property type="entry name" value="NAD(P)-bd_dom_sf"/>
</dbReference>
<dbReference type="InterPro" id="IPR020843">
    <property type="entry name" value="PKS_ER"/>
</dbReference>
<dbReference type="InterPro" id="IPR002364">
    <property type="entry name" value="Quin_OxRdtase/zeta-crystal_CS"/>
</dbReference>
<dbReference type="InterPro" id="IPR050700">
    <property type="entry name" value="YIM1/Zinc_Alcohol_DH_Fams"/>
</dbReference>
<dbReference type="NCBIfam" id="TIGR02817">
    <property type="entry name" value="adh_fam_1"/>
    <property type="match status" value="1"/>
</dbReference>
<dbReference type="PANTHER" id="PTHR11695">
    <property type="entry name" value="ALCOHOL DEHYDROGENASE RELATED"/>
    <property type="match status" value="1"/>
</dbReference>
<dbReference type="PANTHER" id="PTHR11695:SF294">
    <property type="entry name" value="RETICULON-4-INTERACTING PROTEIN 1, MITOCHONDRIAL"/>
    <property type="match status" value="1"/>
</dbReference>
<dbReference type="Pfam" id="PF08240">
    <property type="entry name" value="ADH_N"/>
    <property type="match status" value="1"/>
</dbReference>
<dbReference type="Pfam" id="PF00107">
    <property type="entry name" value="ADH_zinc_N"/>
    <property type="match status" value="1"/>
</dbReference>
<dbReference type="SMART" id="SM00829">
    <property type="entry name" value="PKS_ER"/>
    <property type="match status" value="1"/>
</dbReference>
<dbReference type="SUPFAM" id="SSF50129">
    <property type="entry name" value="GroES-like"/>
    <property type="match status" value="1"/>
</dbReference>
<dbReference type="SUPFAM" id="SSF51735">
    <property type="entry name" value="NAD(P)-binding Rossmann-fold domains"/>
    <property type="match status" value="1"/>
</dbReference>
<dbReference type="PROSITE" id="PS01162">
    <property type="entry name" value="QOR_ZETA_CRYSTAL"/>
    <property type="match status" value="1"/>
</dbReference>
<name>ZDH1_STAAM</name>
<sequence length="335" mass="37574">MKMIGFEKPFKLEEGNLFKVYEQRKPTPENDDILVKVNSISVNPVDTKQRQMKVTQAPRVLGFDAIGTVEAIGPDVTLFSPGDVVFYAGSPNRQGSNATYQLVSEAIVAKAPHNISANEAVSLPLTGITAYETFFDTFKISHNPSENVGKSVLIINGAGGVGSIATQIAKRYGLTVITTASRQETTEWCEKMGADIVLNHKEDLVRQFKEKEIPLVDYIFCTYNTDLYYNTMIELIKPLGHITTIVAFNEDQDLNALKLKSITFTHEFMFARPIHRTPDMIKQHEYLEDITKNIELGHYQPTTTQVFEGLSPENLYQAHQLLEKQSMIGKLVINI</sequence>
<feature type="chain" id="PRO_0000160927" description="Zinc-type alcohol dehydrogenase-like protein SAV2186">
    <location>
        <begin position="1"/>
        <end position="335"/>
    </location>
</feature>
<reference key="1">
    <citation type="journal article" date="2001" name="Lancet">
        <title>Whole genome sequencing of meticillin-resistant Staphylococcus aureus.</title>
        <authorList>
            <person name="Kuroda M."/>
            <person name="Ohta T."/>
            <person name="Uchiyama I."/>
            <person name="Baba T."/>
            <person name="Yuzawa H."/>
            <person name="Kobayashi I."/>
            <person name="Cui L."/>
            <person name="Oguchi A."/>
            <person name="Aoki K."/>
            <person name="Nagai Y."/>
            <person name="Lian J.-Q."/>
            <person name="Ito T."/>
            <person name="Kanamori M."/>
            <person name="Matsumaru H."/>
            <person name="Maruyama A."/>
            <person name="Murakami H."/>
            <person name="Hosoyama A."/>
            <person name="Mizutani-Ui Y."/>
            <person name="Takahashi N.K."/>
            <person name="Sawano T."/>
            <person name="Inoue R."/>
            <person name="Kaito C."/>
            <person name="Sekimizu K."/>
            <person name="Hirakawa H."/>
            <person name="Kuhara S."/>
            <person name="Goto S."/>
            <person name="Yabuzaki J."/>
            <person name="Kanehisa M."/>
            <person name="Yamashita A."/>
            <person name="Oshima K."/>
            <person name="Furuya K."/>
            <person name="Yoshino C."/>
            <person name="Shiba T."/>
            <person name="Hattori M."/>
            <person name="Ogasawara N."/>
            <person name="Hayashi H."/>
            <person name="Hiramatsu K."/>
        </authorList>
    </citation>
    <scope>NUCLEOTIDE SEQUENCE [LARGE SCALE GENOMIC DNA]</scope>
    <source>
        <strain>Mu50 / ATCC 700699</strain>
    </source>
</reference>